<accession>Q8Y9Y1</accession>
<evidence type="ECO:0000255" key="1">
    <source>
        <dbReference type="HAMAP-Rule" id="MF_01669"/>
    </source>
</evidence>
<proteinExistence type="inferred from homology"/>
<dbReference type="EC" id="3.7.1.22" evidence="1"/>
<dbReference type="EMBL" id="AL591975">
    <property type="protein sequence ID" value="CAC98465.1"/>
    <property type="molecule type" value="Genomic_DNA"/>
</dbReference>
<dbReference type="PIR" id="AC1123">
    <property type="entry name" value="AC1123"/>
</dbReference>
<dbReference type="RefSeq" id="NP_463916.1">
    <property type="nucleotide sequence ID" value="NC_003210.1"/>
</dbReference>
<dbReference type="RefSeq" id="WP_010989447.1">
    <property type="nucleotide sequence ID" value="NC_003210.1"/>
</dbReference>
<dbReference type="SMR" id="Q8Y9Y1"/>
<dbReference type="STRING" id="169963.gene:17593037"/>
<dbReference type="PaxDb" id="169963-lmo0386"/>
<dbReference type="EnsemblBacteria" id="CAC98465">
    <property type="protein sequence ID" value="CAC98465"/>
    <property type="gene ID" value="CAC98465"/>
</dbReference>
<dbReference type="GeneID" id="987642"/>
<dbReference type="KEGG" id="lmo:lmo0386"/>
<dbReference type="PATRIC" id="fig|169963.11.peg.399"/>
<dbReference type="eggNOG" id="COG3962">
    <property type="taxonomic scope" value="Bacteria"/>
</dbReference>
<dbReference type="HOGENOM" id="CLU_013748_6_0_9"/>
<dbReference type="OrthoDB" id="4494979at2"/>
<dbReference type="PhylomeDB" id="Q8Y9Y1"/>
<dbReference type="BioCyc" id="LMON169963:LMO0386-MONOMER"/>
<dbReference type="UniPathway" id="UPA00076">
    <property type="reaction ID" value="UER00145"/>
</dbReference>
<dbReference type="Proteomes" id="UP000000817">
    <property type="component" value="Chromosome"/>
</dbReference>
<dbReference type="GO" id="GO:0005948">
    <property type="term" value="C:acetolactate synthase complex"/>
    <property type="evidence" value="ECO:0000318"/>
    <property type="project" value="GO_Central"/>
</dbReference>
<dbReference type="GO" id="GO:0102481">
    <property type="term" value="F:3D-(3,5/4)-trihydroxycyclohexane-1,2-dione hydrolase activity"/>
    <property type="evidence" value="ECO:0007669"/>
    <property type="project" value="UniProtKB-EC"/>
</dbReference>
<dbReference type="GO" id="GO:0003984">
    <property type="term" value="F:acetolactate synthase activity"/>
    <property type="evidence" value="ECO:0000318"/>
    <property type="project" value="GO_Central"/>
</dbReference>
<dbReference type="GO" id="GO:0050660">
    <property type="term" value="F:flavin adenine dinucleotide binding"/>
    <property type="evidence" value="ECO:0000318"/>
    <property type="project" value="GO_Central"/>
</dbReference>
<dbReference type="GO" id="GO:0000287">
    <property type="term" value="F:magnesium ion binding"/>
    <property type="evidence" value="ECO:0007669"/>
    <property type="project" value="UniProtKB-UniRule"/>
</dbReference>
<dbReference type="GO" id="GO:0030976">
    <property type="term" value="F:thiamine pyrophosphate binding"/>
    <property type="evidence" value="ECO:0007669"/>
    <property type="project" value="UniProtKB-UniRule"/>
</dbReference>
<dbReference type="GO" id="GO:0019310">
    <property type="term" value="P:inositol catabolic process"/>
    <property type="evidence" value="ECO:0007669"/>
    <property type="project" value="UniProtKB-UniRule"/>
</dbReference>
<dbReference type="GO" id="GO:0009097">
    <property type="term" value="P:isoleucine biosynthetic process"/>
    <property type="evidence" value="ECO:0000318"/>
    <property type="project" value="GO_Central"/>
</dbReference>
<dbReference type="GO" id="GO:0009099">
    <property type="term" value="P:L-valine biosynthetic process"/>
    <property type="evidence" value="ECO:0000318"/>
    <property type="project" value="GO_Central"/>
</dbReference>
<dbReference type="CDD" id="cd07035">
    <property type="entry name" value="TPP_PYR_POX_like"/>
    <property type="match status" value="1"/>
</dbReference>
<dbReference type="Gene3D" id="3.40.50.970">
    <property type="match status" value="2"/>
</dbReference>
<dbReference type="Gene3D" id="3.40.50.1220">
    <property type="entry name" value="TPP-binding domain"/>
    <property type="match status" value="1"/>
</dbReference>
<dbReference type="HAMAP" id="MF_01669">
    <property type="entry name" value="IolD"/>
    <property type="match status" value="1"/>
</dbReference>
<dbReference type="InterPro" id="IPR029035">
    <property type="entry name" value="DHS-like_NAD/FAD-binding_dom"/>
</dbReference>
<dbReference type="InterPro" id="IPR030817">
    <property type="entry name" value="Myo_inos_IolD"/>
</dbReference>
<dbReference type="InterPro" id="IPR023757">
    <property type="entry name" value="THcHDO_hydrolase_firmi"/>
</dbReference>
<dbReference type="InterPro" id="IPR029061">
    <property type="entry name" value="THDP-binding"/>
</dbReference>
<dbReference type="InterPro" id="IPR012000">
    <property type="entry name" value="Thiamin_PyroP_enz_cen_dom"/>
</dbReference>
<dbReference type="InterPro" id="IPR012001">
    <property type="entry name" value="Thiamin_PyroP_enz_TPP-bd_dom"/>
</dbReference>
<dbReference type="InterPro" id="IPR045229">
    <property type="entry name" value="TPP_enz"/>
</dbReference>
<dbReference type="InterPro" id="IPR011766">
    <property type="entry name" value="TPP_enzyme_TPP-bd"/>
</dbReference>
<dbReference type="NCBIfam" id="TIGR04377">
    <property type="entry name" value="myo_inos_iolD"/>
    <property type="match status" value="1"/>
</dbReference>
<dbReference type="PANTHER" id="PTHR18968:SF9">
    <property type="entry name" value="3D-(3,5_4)-TRIHYDROXYCYCLOHEXANE-1,2-DIONE HYDROLASE"/>
    <property type="match status" value="1"/>
</dbReference>
<dbReference type="PANTHER" id="PTHR18968">
    <property type="entry name" value="THIAMINE PYROPHOSPHATE ENZYMES"/>
    <property type="match status" value="1"/>
</dbReference>
<dbReference type="Pfam" id="PF02775">
    <property type="entry name" value="TPP_enzyme_C"/>
    <property type="match status" value="1"/>
</dbReference>
<dbReference type="Pfam" id="PF00205">
    <property type="entry name" value="TPP_enzyme_M"/>
    <property type="match status" value="1"/>
</dbReference>
<dbReference type="Pfam" id="PF02776">
    <property type="entry name" value="TPP_enzyme_N"/>
    <property type="match status" value="1"/>
</dbReference>
<dbReference type="SUPFAM" id="SSF52467">
    <property type="entry name" value="DHS-like NAD/FAD-binding domain"/>
    <property type="match status" value="1"/>
</dbReference>
<dbReference type="SUPFAM" id="SSF52518">
    <property type="entry name" value="Thiamin diphosphate-binding fold (THDP-binding)"/>
    <property type="match status" value="2"/>
</dbReference>
<organism>
    <name type="scientific">Listeria monocytogenes serovar 1/2a (strain ATCC BAA-679 / EGD-e)</name>
    <dbReference type="NCBI Taxonomy" id="169963"/>
    <lineage>
        <taxon>Bacteria</taxon>
        <taxon>Bacillati</taxon>
        <taxon>Bacillota</taxon>
        <taxon>Bacilli</taxon>
        <taxon>Bacillales</taxon>
        <taxon>Listeriaceae</taxon>
        <taxon>Listeria</taxon>
    </lineage>
</organism>
<keyword id="KW-0378">Hydrolase</keyword>
<keyword id="KW-0460">Magnesium</keyword>
<keyword id="KW-0479">Metal-binding</keyword>
<keyword id="KW-0520">NAD</keyword>
<keyword id="KW-1185">Reference proteome</keyword>
<keyword id="KW-0786">Thiamine pyrophosphate</keyword>
<reference key="1">
    <citation type="journal article" date="2001" name="Science">
        <title>Comparative genomics of Listeria species.</title>
        <authorList>
            <person name="Glaser P."/>
            <person name="Frangeul L."/>
            <person name="Buchrieser C."/>
            <person name="Rusniok C."/>
            <person name="Amend A."/>
            <person name="Baquero F."/>
            <person name="Berche P."/>
            <person name="Bloecker H."/>
            <person name="Brandt P."/>
            <person name="Chakraborty T."/>
            <person name="Charbit A."/>
            <person name="Chetouani F."/>
            <person name="Couve E."/>
            <person name="de Daruvar A."/>
            <person name="Dehoux P."/>
            <person name="Domann E."/>
            <person name="Dominguez-Bernal G."/>
            <person name="Duchaud E."/>
            <person name="Durant L."/>
            <person name="Dussurget O."/>
            <person name="Entian K.-D."/>
            <person name="Fsihi H."/>
            <person name="Garcia-del Portillo F."/>
            <person name="Garrido P."/>
            <person name="Gautier L."/>
            <person name="Goebel W."/>
            <person name="Gomez-Lopez N."/>
            <person name="Hain T."/>
            <person name="Hauf J."/>
            <person name="Jackson D."/>
            <person name="Jones L.-M."/>
            <person name="Kaerst U."/>
            <person name="Kreft J."/>
            <person name="Kuhn M."/>
            <person name="Kunst F."/>
            <person name="Kurapkat G."/>
            <person name="Madueno E."/>
            <person name="Maitournam A."/>
            <person name="Mata Vicente J."/>
            <person name="Ng E."/>
            <person name="Nedjari H."/>
            <person name="Nordsiek G."/>
            <person name="Novella S."/>
            <person name="de Pablos B."/>
            <person name="Perez-Diaz J.-C."/>
            <person name="Purcell R."/>
            <person name="Remmel B."/>
            <person name="Rose M."/>
            <person name="Schlueter T."/>
            <person name="Simoes N."/>
            <person name="Tierrez A."/>
            <person name="Vazquez-Boland J.-A."/>
            <person name="Voss H."/>
            <person name="Wehland J."/>
            <person name="Cossart P."/>
        </authorList>
    </citation>
    <scope>NUCLEOTIDE SEQUENCE [LARGE SCALE GENOMIC DNA]</scope>
    <source>
        <strain>ATCC BAA-679 / EGD-e</strain>
    </source>
</reference>
<sequence length="638" mass="70275">MTEKTIRLTTAQALVKFLNQQYIEVDDEMAPFVDGIFTVFGHGNVVGIGQALEEDPGHLNVYQGKNEQGMAHAAIAYAKQKNRKRIYACSASAGPGSANLITAASTALANNLPVLFLPADTFATRQPDPVLQQLEHESSAAITTNDGFQAVSRYFDRVQRPEQLMSALIRAFEVMTNPASAGPATICIAQDTEGEAFDYPVEFFQKRIHYLNRQIPTKRELTEAARLIQASKTPVIIVGGGARYSDAREELIALSEQSNIPLVETHAGKSTVEFDFKNNLGGTGILGTLAANKAIRDADLVIGIGTRYTDFTTSSKTAFGPATKFININVSRMQTYKLDAFQVVGDAKATLAELAPLLKGYQTQFGDRIAVYKAEWLAERTRLQNTKFNREAFTPEIKDQFDQATLNEYADSLQTEFTQTEALITINDTVAPDSIVVCSAGSLPGDLQRLWNPAVPNTYHLEYGYSCMGYEINGALGAKMAAANNQEVYSIVGDGSFCMSHSELLTSLQYGKKINIMLFDNSGFGCINNLQMANGSDSFFCEFRDSDNQIMQVDYAKIAEGYGAKVYRANTKEDLISALEDAKKQTKTTLIDMKVLPKTMSEGYLNWWNVGVSEVSNKESIKQAYEEKQTNLKNARLY</sequence>
<name>IOLD_LISMO</name>
<feature type="chain" id="PRO_0000352546" description="3D-(3,5/4)-trihydroxycyclohexane-1,2-dione hydrolase">
    <location>
        <begin position="1"/>
        <end position="638"/>
    </location>
</feature>
<feature type="region of interest" description="Thiamine pyrophosphate binding" evidence="1">
    <location>
        <begin position="442"/>
        <end position="523"/>
    </location>
</feature>
<feature type="binding site" evidence="1">
    <location>
        <position position="67"/>
    </location>
    <ligand>
        <name>thiamine diphosphate</name>
        <dbReference type="ChEBI" id="CHEBI:58937"/>
    </ligand>
</feature>
<feature type="binding site" evidence="1">
    <location>
        <position position="494"/>
    </location>
    <ligand>
        <name>Mg(2+)</name>
        <dbReference type="ChEBI" id="CHEBI:18420"/>
    </ligand>
</feature>
<feature type="binding site" evidence="1">
    <location>
        <position position="521"/>
    </location>
    <ligand>
        <name>Mg(2+)</name>
        <dbReference type="ChEBI" id="CHEBI:18420"/>
    </ligand>
</feature>
<protein>
    <recommendedName>
        <fullName evidence="1">3D-(3,5/4)-trihydroxycyclohexane-1,2-dione hydrolase</fullName>
        <shortName evidence="1">THcHDO hydrolase</shortName>
        <ecNumber evidence="1">3.7.1.22</ecNumber>
    </recommendedName>
</protein>
<gene>
    <name evidence="1" type="primary">iolD</name>
    <name type="ordered locus">lmo0386</name>
</gene>
<comment type="function">
    <text evidence="1">Involved in the cleavage of the C1-C2 bond of 3D-(3,5/4)-trihydroxycyclohexane-1,2-dione (THcHDO) to yield 5-deoxy-glucuronate (5DG).</text>
</comment>
<comment type="catalytic activity">
    <reaction evidence="1">
        <text>3D-3,5/4-trihydroxycyclohexane-1,2-dione + H2O = 5-deoxy-D-glucuronate + H(+)</text>
        <dbReference type="Rhea" id="RHEA:25836"/>
        <dbReference type="ChEBI" id="CHEBI:15377"/>
        <dbReference type="ChEBI" id="CHEBI:15378"/>
        <dbReference type="ChEBI" id="CHEBI:28446"/>
        <dbReference type="ChEBI" id="CHEBI:58852"/>
        <dbReference type="EC" id="3.7.1.22"/>
    </reaction>
</comment>
<comment type="cofactor">
    <cofactor evidence="1">
        <name>Mg(2+)</name>
        <dbReference type="ChEBI" id="CHEBI:18420"/>
    </cofactor>
    <text evidence="1">Binds 1 Mg(2+) ion per subunit.</text>
</comment>
<comment type="cofactor">
    <cofactor evidence="1">
        <name>thiamine diphosphate</name>
        <dbReference type="ChEBI" id="CHEBI:58937"/>
    </cofactor>
    <text evidence="1">Binds 1 thiamine pyrophosphate per subunit.</text>
</comment>
<comment type="pathway">
    <text evidence="1">Polyol metabolism; myo-inositol degradation into acetyl-CoA; acetyl-CoA from myo-inositol: step 3/7.</text>
</comment>
<comment type="similarity">
    <text evidence="1">Belongs to the TPP enzyme family.</text>
</comment>